<accession>Q2NS80</accession>
<dbReference type="EMBL" id="AP008232">
    <property type="protein sequence ID" value="BAE74995.1"/>
    <property type="molecule type" value="Genomic_DNA"/>
</dbReference>
<dbReference type="RefSeq" id="WP_011411544.1">
    <property type="nucleotide sequence ID" value="NZ_LN854557.1"/>
</dbReference>
<dbReference type="SMR" id="Q2NS80"/>
<dbReference type="STRING" id="343509.SG1720"/>
<dbReference type="KEGG" id="sgl:SG1720"/>
<dbReference type="eggNOG" id="ENOG5032YJI">
    <property type="taxonomic scope" value="Bacteria"/>
</dbReference>
<dbReference type="HOGENOM" id="CLU_198936_0_0_6"/>
<dbReference type="OrthoDB" id="6522148at2"/>
<dbReference type="BioCyc" id="SGLO343509:SGP1_RS15620-MONOMER"/>
<dbReference type="Proteomes" id="UP000001932">
    <property type="component" value="Chromosome"/>
</dbReference>
<dbReference type="GO" id="GO:0005886">
    <property type="term" value="C:plasma membrane"/>
    <property type="evidence" value="ECO:0007669"/>
    <property type="project" value="UniProtKB-SubCell"/>
</dbReference>
<dbReference type="HAMAP" id="MF_01566">
    <property type="entry name" value="UPF0370"/>
    <property type="match status" value="1"/>
</dbReference>
<dbReference type="InterPro" id="IPR020910">
    <property type="entry name" value="UPF0370"/>
</dbReference>
<dbReference type="NCBIfam" id="NF010185">
    <property type="entry name" value="PRK13664.1"/>
    <property type="match status" value="1"/>
</dbReference>
<dbReference type="Pfam" id="PF13980">
    <property type="entry name" value="UPF0370"/>
    <property type="match status" value="1"/>
</dbReference>
<protein>
    <recommendedName>
        <fullName evidence="1">UPF0370 protein SG1720</fullName>
    </recommendedName>
</protein>
<evidence type="ECO:0000255" key="1">
    <source>
        <dbReference type="HAMAP-Rule" id="MF_01566"/>
    </source>
</evidence>
<evidence type="ECO:0000256" key="2">
    <source>
        <dbReference type="SAM" id="MobiDB-lite"/>
    </source>
</evidence>
<organism>
    <name type="scientific">Sodalis glossinidius (strain morsitans)</name>
    <dbReference type="NCBI Taxonomy" id="343509"/>
    <lineage>
        <taxon>Bacteria</taxon>
        <taxon>Pseudomonadati</taxon>
        <taxon>Pseudomonadota</taxon>
        <taxon>Gammaproteobacteria</taxon>
        <taxon>Enterobacterales</taxon>
        <taxon>Bruguierivoracaceae</taxon>
        <taxon>Sodalis</taxon>
    </lineage>
</organism>
<sequence>MGWLADYWWVVLLVLAGMLIGGVKALRRVDATSYLKNRPELPPHRDNNAQWDEEDDWPKKP</sequence>
<keyword id="KW-1003">Cell membrane</keyword>
<keyword id="KW-0472">Membrane</keyword>
<keyword id="KW-0812">Transmembrane</keyword>
<keyword id="KW-1133">Transmembrane helix</keyword>
<feature type="chain" id="PRO_0000244554" description="UPF0370 protein SG1720">
    <location>
        <begin position="1"/>
        <end position="61"/>
    </location>
</feature>
<feature type="transmembrane region" description="Helical" evidence="1">
    <location>
        <begin position="3"/>
        <end position="23"/>
    </location>
</feature>
<feature type="region of interest" description="Disordered" evidence="2">
    <location>
        <begin position="37"/>
        <end position="61"/>
    </location>
</feature>
<feature type="compositionally biased region" description="Basic and acidic residues" evidence="2">
    <location>
        <begin position="37"/>
        <end position="47"/>
    </location>
</feature>
<feature type="compositionally biased region" description="Acidic residues" evidence="2">
    <location>
        <begin position="51"/>
        <end position="61"/>
    </location>
</feature>
<gene>
    <name type="ordered locus">SG1720</name>
</gene>
<proteinExistence type="inferred from homology"/>
<reference key="1">
    <citation type="journal article" date="2006" name="Genome Res.">
        <title>Massive genome erosion and functional adaptations provide insights into the symbiotic lifestyle of Sodalis glossinidius in the tsetse host.</title>
        <authorList>
            <person name="Toh H."/>
            <person name="Weiss B.L."/>
            <person name="Perkin S.A.H."/>
            <person name="Yamashita A."/>
            <person name="Oshima K."/>
            <person name="Hattori M."/>
            <person name="Aksoy S."/>
        </authorList>
    </citation>
    <scope>NUCLEOTIDE SEQUENCE [LARGE SCALE GENOMIC DNA]</scope>
    <source>
        <strain>morsitans</strain>
    </source>
</reference>
<comment type="subcellular location">
    <subcellularLocation>
        <location evidence="1">Cell membrane</location>
        <topology evidence="1">Single-pass membrane protein</topology>
    </subcellularLocation>
</comment>
<comment type="similarity">
    <text evidence="1">Belongs to the UPF0370 family.</text>
</comment>
<name>Y1720_SODGM</name>